<name>VP3_ROTHT</name>
<reference key="1">
    <citation type="journal article" date="2004" name="J. Gen. Virol.">
        <title>Sequence analysis of the guanylyltransferase (VP3) of group A rotaviruses.</title>
        <authorList>
            <person name="Cook J.P."/>
            <person name="McCrae M.A."/>
        </authorList>
    </citation>
    <scope>NUCLEOTIDE SEQUENCE [GENOMIC RNA]</scope>
</reference>
<reference key="2">
    <citation type="journal article" date="2008" name="J. Virol.">
        <title>Full genome-based classification of rotaviruses reveals a common origin between human Wa-Like and porcine rotavirus strains and human DS-1-like and bovine rotavirus strains.</title>
        <authorList>
            <person name="Matthijnssens J."/>
            <person name="Ciarlet M."/>
            <person name="Heiman E.M."/>
            <person name="Arijs I."/>
            <person name="Delbeke T."/>
            <person name="McDonald S.M."/>
            <person name="Palombo E.A."/>
            <person name="Iturriza-Gomara M."/>
            <person name="Maes P."/>
            <person name="Patton J.T."/>
            <person name="Rahman M."/>
            <person name="Van Ranst M."/>
        </authorList>
    </citation>
    <scope>NUCLEOTIDE SEQUENCE [GENOMIC RNA]</scope>
</reference>
<comment type="function">
    <text evidence="1">Multifunctional enzyme involved in mRNA capping. Catalyzes the formation of the 5' cap structure on the viral plus-strand transcripts. Specifically binds to GTP and displays guanylyltransferase and methyltransferase activities. Has affinity for ssRNA but not for dsRNA. Capping activity is non-specific and caps RNAs that initiate with either a G or an A residue. Together with VP1 polymerase, forms a VP1-VP3 complex positioned near the channels situated at each of the five-fold vertices of the core. Following infection, the outermost layer of the virus is lost, leaving a double-layered particle (DLP) made up of the core and VP6 shell. VP1 then catalyzes the transcription of fully conservative plus-strand genomic RNAs that are capped by VP3 and extruded through the DLP's channels into the cytoplasm where they function as mRNAs for translation of viral proteins. DLPs probably have an RNA triphosphatase activity as well, whereas open cores do not.</text>
</comment>
<comment type="function">
    <text evidence="1">Counteracts the host innate immune response thanks to its phosphodiesterase that degrades the 5'-triphosphorylated, 2'-5' linked adenylate oligomers produced by the host cell IFN-inducible 2',5'-oligoadenylate synthetase (OAS). The host RNaseL is therefore not activated.</text>
</comment>
<comment type="catalytic activity">
    <reaction evidence="1">
        <text>a 5'-end diphospho-ribonucleoside in mRNA + GTP + H(+) = a 5'-end (5'-triphosphoguanosine)-ribonucleoside in mRNA + diphosphate</text>
        <dbReference type="Rhea" id="RHEA:67012"/>
        <dbReference type="Rhea" id="RHEA-COMP:17165"/>
        <dbReference type="Rhea" id="RHEA-COMP:17166"/>
        <dbReference type="ChEBI" id="CHEBI:15378"/>
        <dbReference type="ChEBI" id="CHEBI:33019"/>
        <dbReference type="ChEBI" id="CHEBI:37565"/>
        <dbReference type="ChEBI" id="CHEBI:167616"/>
        <dbReference type="ChEBI" id="CHEBI:167617"/>
        <dbReference type="EC" id="2.7.7.50"/>
    </reaction>
</comment>
<comment type="catalytic activity">
    <reaction evidence="1">
        <text>a 5'-end (5'-triphosphoguanosine)-ribonucleoside in mRNA + S-adenosyl-L-methionine = a 5'-end (N(7)-methyl 5'-triphosphoguanosine)-ribonucleoside in mRNA + S-adenosyl-L-homocysteine</text>
        <dbReference type="Rhea" id="RHEA:67008"/>
        <dbReference type="Rhea" id="RHEA-COMP:17166"/>
        <dbReference type="Rhea" id="RHEA-COMP:17167"/>
        <dbReference type="ChEBI" id="CHEBI:57856"/>
        <dbReference type="ChEBI" id="CHEBI:59789"/>
        <dbReference type="ChEBI" id="CHEBI:156461"/>
        <dbReference type="ChEBI" id="CHEBI:167617"/>
        <dbReference type="EC" id="2.1.1.56"/>
    </reaction>
</comment>
<comment type="catalytic activity">
    <reaction evidence="1">
        <text>5'-triphosphoadenylyl-(2'-&gt;5')-adenylyl-(2'-&gt;5')-adenosine + 2 H2O = 2 AMP + ATP + 2 H(+)</text>
        <dbReference type="Rhea" id="RHEA:45964"/>
        <dbReference type="ChEBI" id="CHEBI:15377"/>
        <dbReference type="ChEBI" id="CHEBI:15378"/>
        <dbReference type="ChEBI" id="CHEBI:30616"/>
        <dbReference type="ChEBI" id="CHEBI:67143"/>
        <dbReference type="ChEBI" id="CHEBI:456215"/>
    </reaction>
</comment>
<comment type="subunit">
    <text evidence="1">Interacts with VP1. Interacts with VP2.</text>
</comment>
<comment type="subcellular location">
    <subcellularLocation>
        <location evidence="1">Virion</location>
    </subcellularLocation>
    <text evidence="1">Attached inside the inner capsid as a minor component. There are about 11 to 12 copies per virion.</text>
</comment>
<comment type="domain">
    <text evidence="1">Contains a bipartite N7-methyltransferase domain, a 2'-O-methyltransferase domain and a GTase/RTPase domain. The C-terminus contains a phosphodiesterase domain that degrades the 5'-triphosphorylated, 2'-5' linked adenylate oligomers produced by the host cell in response to IFN stimulation.</text>
</comment>
<comment type="similarity">
    <text evidence="1">Belongs to the rotavirus VP3 family.</text>
</comment>
<feature type="chain" id="PRO_0000368083" description="Protein VP3">
    <location>
        <begin position="1"/>
        <end position="835"/>
    </location>
</feature>
<feature type="region of interest" description="N7-methyltransferase activity" evidence="1">
    <location>
        <begin position="171"/>
        <end position="245"/>
    </location>
</feature>
<feature type="region of interest" description="2'-O-methyltransferase activity" evidence="1">
    <location>
        <begin position="246"/>
        <end position="428"/>
    </location>
</feature>
<feature type="region of interest" description="N7-methyltransferase activity" evidence="1">
    <location>
        <begin position="429"/>
        <end position="555"/>
    </location>
</feature>
<feature type="region of interest" description="GTase/RTPase activity" evidence="1">
    <location>
        <begin position="556"/>
        <end position="692"/>
    </location>
</feature>
<feature type="region of interest" description="2'-5'-phosphodiesterase activity" evidence="1">
    <location>
        <begin position="693"/>
        <end position="835"/>
    </location>
</feature>
<feature type="active site" description="For 2'-5'-phosphodiesterase activity" evidence="1">
    <location>
        <position position="718"/>
    </location>
</feature>
<feature type="active site" description="For 2'-5'-phosphodiesterase activity" evidence="1">
    <location>
        <position position="720"/>
    </location>
</feature>
<feature type="active site" description="For 2'-5'-phosphodiesterase activity" evidence="1">
    <location>
        <position position="797"/>
    </location>
</feature>
<feature type="active site" description="For 2'-5'-phosphodiesterase activity" evidence="1">
    <location>
        <position position="799"/>
    </location>
</feature>
<feature type="sequence conflict" description="In Ref. 1; AAQ21046." evidence="2" ref="1">
    <original>N</original>
    <variation>D</variation>
    <location>
        <position position="347"/>
    </location>
</feature>
<feature type="sequence conflict" description="In Ref. 1; AAQ21046." evidence="2" ref="1">
    <original>D</original>
    <variation>A</variation>
    <location>
        <position position="695"/>
    </location>
</feature>
<accession>B1NKT9</accession>
<accession>Q6WNW0</accession>
<proteinExistence type="inferred from homology"/>
<dbReference type="EC" id="3.1.4.-" evidence="1"/>
<dbReference type="EC" id="2.7.7.50" evidence="1"/>
<dbReference type="EC" id="2.1.1.56" evidence="1"/>
<dbReference type="EMBL" id="AY277919">
    <property type="protein sequence ID" value="AAQ21046.1"/>
    <property type="molecule type" value="Genomic_RNA"/>
</dbReference>
<dbReference type="EMBL" id="EF583047">
    <property type="protein sequence ID" value="ABU87856.1"/>
    <property type="molecule type" value="Genomic_RNA"/>
</dbReference>
<dbReference type="SMR" id="B1NKT9"/>
<dbReference type="Proteomes" id="UP000007048">
    <property type="component" value="Genome"/>
</dbReference>
<dbReference type="GO" id="GO:0019013">
    <property type="term" value="C:viral nucleocapsid"/>
    <property type="evidence" value="ECO:0007669"/>
    <property type="project" value="UniProtKB-UniRule"/>
</dbReference>
<dbReference type="GO" id="GO:0005525">
    <property type="term" value="F:GTP binding"/>
    <property type="evidence" value="ECO:0007669"/>
    <property type="project" value="UniProtKB-UniRule"/>
</dbReference>
<dbReference type="GO" id="GO:0016787">
    <property type="term" value="F:hydrolase activity"/>
    <property type="evidence" value="ECO:0007669"/>
    <property type="project" value="UniProtKB-KW"/>
</dbReference>
<dbReference type="GO" id="GO:0004482">
    <property type="term" value="F:mRNA 5'-cap (guanine-N7-)-methyltransferase activity"/>
    <property type="evidence" value="ECO:0007669"/>
    <property type="project" value="UniProtKB-UniRule"/>
</dbReference>
<dbReference type="GO" id="GO:0004484">
    <property type="term" value="F:mRNA guanylyltransferase activity"/>
    <property type="evidence" value="ECO:0007669"/>
    <property type="project" value="UniProtKB-UniRule"/>
</dbReference>
<dbReference type="GO" id="GO:0003723">
    <property type="term" value="F:RNA binding"/>
    <property type="evidence" value="ECO:0007669"/>
    <property type="project" value="UniProtKB-UniRule"/>
</dbReference>
<dbReference type="GO" id="GO:0052170">
    <property type="term" value="P:symbiont-mediated suppression of host innate immune response"/>
    <property type="evidence" value="ECO:0007669"/>
    <property type="project" value="UniProtKB-KW"/>
</dbReference>
<dbReference type="GO" id="GO:0016032">
    <property type="term" value="P:viral process"/>
    <property type="evidence" value="ECO:0007669"/>
    <property type="project" value="UniProtKB-UniRule"/>
</dbReference>
<dbReference type="CDD" id="cd20757">
    <property type="entry name" value="capping_2-OMTase_Rotavirus"/>
    <property type="match status" value="1"/>
</dbReference>
<dbReference type="HAMAP" id="MF_04124">
    <property type="entry name" value="Rota_VP3"/>
    <property type="match status" value="1"/>
</dbReference>
<dbReference type="HAMAP" id="MF_04128">
    <property type="entry name" value="Rota_VP3_A"/>
    <property type="match status" value="1"/>
</dbReference>
<dbReference type="InterPro" id="IPR011181">
    <property type="entry name" value="VP3_Rotav"/>
</dbReference>
<dbReference type="Pfam" id="PF06929">
    <property type="entry name" value="Rotavirus_VP3"/>
    <property type="match status" value="1"/>
</dbReference>
<dbReference type="PIRSF" id="PIRSF004015">
    <property type="entry name" value="LigT_rotavirus"/>
    <property type="match status" value="1"/>
</dbReference>
<dbReference type="PROSITE" id="PS51589">
    <property type="entry name" value="SAM_MT56_VP3"/>
    <property type="match status" value="1"/>
</dbReference>
<keyword id="KW-0342">GTP-binding</keyword>
<keyword id="KW-0945">Host-virus interaction</keyword>
<keyword id="KW-0378">Hydrolase</keyword>
<keyword id="KW-1090">Inhibition of host innate immune response by virus</keyword>
<keyword id="KW-0489">Methyltransferase</keyword>
<keyword id="KW-0506">mRNA capping</keyword>
<keyword id="KW-0507">mRNA processing</keyword>
<keyword id="KW-0511">Multifunctional enzyme</keyword>
<keyword id="KW-0547">Nucleotide-binding</keyword>
<keyword id="KW-0548">Nucleotidyltransferase</keyword>
<keyword id="KW-0694">RNA-binding</keyword>
<keyword id="KW-0949">S-adenosyl-L-methionine</keyword>
<keyword id="KW-0808">Transferase</keyword>
<keyword id="KW-0899">Viral immunoevasion</keyword>
<keyword id="KW-0946">Virion</keyword>
<protein>
    <recommendedName>
        <fullName evidence="1">Protein VP3</fullName>
    </recommendedName>
    <domain>
        <recommendedName>
            <fullName evidence="1">2',5'-phosphodiesterase</fullName>
            <ecNumber evidence="1">3.1.4.-</ecNumber>
        </recommendedName>
    </domain>
    <domain>
        <recommendedName>
            <fullName evidence="1">mRNA guanylyltransferase</fullName>
            <ecNumber evidence="1">2.7.7.50</ecNumber>
        </recommendedName>
    </domain>
    <domain>
        <recommendedName>
            <fullName evidence="1">mRNA (guanine-N(7))-methyltransferase</fullName>
            <ecNumber evidence="1">2.1.1.56</ecNumber>
        </recommendedName>
    </domain>
</protein>
<sequence length="835" mass="97944">MKVLALRHSVAQVYADTQIYLHDDSKDEYENAFLISNLTTHNILYLNYSLKTLKILNKSGIAAVEVQSPDELFALIRCNFTYDYENNIIYLHDYSYYTNNEIRTDQHWITKTDIIDYLLPGWKLTYVGYNGKNTRGHYNFSFSCQNAATDDDIIIEYIYSNELDFQNFLLRKIKERMTTSLPIARLSNRVFRDKLFPSIVNIYKKVINVGPRNESMFTFLNFPTIKQFSNGAYIVKHTIKLKQEKWLGKRVSQFDIGQYKNMLNVVTTIYYYYNLYHSKPIIYMLGSAPSHWIHDIKQYSDFTFETWDPLDTPYSTIHHKELFFYKDVNKLKDNSILYIDIRTDRKNMDWKEWRKVVEQQTVNNLNIAYKYLSTGKAKVCCVKLTAMDLELPITAKLLHHPTTEVRSEFYAILDVWDIITIKRFIPKGVFYAFINNITTENVFIQPPFKLKASPTDYIVALYALSNDFNSRQDVINLINKQKQSLITVRMNNTFKDEPKVNFKNIYDWTFLPTDFELKDSIITSYDGCLGMFGLSISLSSKPTGNNHLFIINGNDKYYKLDQYANHMGISRRSHQIRFSESATSYSGYIFRDLSNNNFNLIGTNVENSVSGHVYNALIYYRYNYAFDLKRWIYLHSIGKVAIEGGRYYEHAPIELIYACRSAREFAILQDDLTVLRYADEIEGYINKVYSITYADDPNYFIGIKFNSIPYEYDVKVPHLTLGVLFISDNMIHNVVTVLKKMKTELFKTEISTSYTYMLSDNIYVANASGVLSTYFKLYNMFYRNHITFGQSRMFIPHITLSFSTKQTVRIESTRLKINSIYLRKIKGETVFDMSE</sequence>
<organism>
    <name type="scientific">Rotavirus A (strain RVA/Human/United Kingdom/ST3/1975/G4P2A[6])</name>
    <name type="common">RV-A</name>
    <name type="synonym">Rotavirus A (strain St. Thomas 3)</name>
    <dbReference type="NCBI Taxonomy" id="10960"/>
    <lineage>
        <taxon>Viruses</taxon>
        <taxon>Riboviria</taxon>
        <taxon>Orthornavirae</taxon>
        <taxon>Duplornaviricota</taxon>
        <taxon>Resentoviricetes</taxon>
        <taxon>Reovirales</taxon>
        <taxon>Sedoreoviridae</taxon>
        <taxon>Rotavirus</taxon>
        <taxon>Rotavirus A</taxon>
    </lineage>
</organism>
<evidence type="ECO:0000255" key="1">
    <source>
        <dbReference type="HAMAP-Rule" id="MF_04128"/>
    </source>
</evidence>
<evidence type="ECO:0000305" key="2"/>
<organismHost>
    <name type="scientific">Homo sapiens</name>
    <name type="common">Human</name>
    <dbReference type="NCBI Taxonomy" id="9606"/>
</organismHost>